<protein>
    <recommendedName>
        <fullName>Glucosidase 2 subunit beta</fullName>
    </recommendedName>
    <alternativeName>
        <fullName>80K-H protein</fullName>
    </alternativeName>
    <alternativeName>
        <fullName>Glucosidase II subunit beta</fullName>
    </alternativeName>
    <alternativeName>
        <fullName>Protein kinase C substrate 60.1 kDa protein heavy chain</fullName>
        <shortName>PKCSH</shortName>
    </alternativeName>
    <alternativeName>
        <fullName evidence="10">Vacuolar system-associated protein 60</fullName>
        <shortName evidence="11">VASAP-60</shortName>
    </alternativeName>
</protein>
<evidence type="ECO:0000250" key="1">
    <source>
        <dbReference type="UniProtKB" id="O08795"/>
    </source>
</evidence>
<evidence type="ECO:0000250" key="2">
    <source>
        <dbReference type="UniProtKB" id="P14314"/>
    </source>
</evidence>
<evidence type="ECO:0000255" key="3"/>
<evidence type="ECO:0000255" key="4">
    <source>
        <dbReference type="PROSITE-ProRule" id="PRU00124"/>
    </source>
</evidence>
<evidence type="ECO:0000255" key="5">
    <source>
        <dbReference type="PROSITE-ProRule" id="PRU00448"/>
    </source>
</evidence>
<evidence type="ECO:0000255" key="6">
    <source>
        <dbReference type="PROSITE-ProRule" id="PRU01262"/>
    </source>
</evidence>
<evidence type="ECO:0000255" key="7">
    <source>
        <dbReference type="PROSITE-ProRule" id="PRU10138"/>
    </source>
</evidence>
<evidence type="ECO:0000256" key="8">
    <source>
        <dbReference type="SAM" id="MobiDB-lite"/>
    </source>
</evidence>
<evidence type="ECO:0000269" key="9">
    <source>
    </source>
</evidence>
<evidence type="ECO:0000303" key="10">
    <source>
    </source>
</evidence>
<evidence type="ECO:0000303" key="11">
    <source ref="2"/>
</evidence>
<evidence type="ECO:0000305" key="12"/>
<dbReference type="EMBL" id="U49178">
    <property type="protein sequence ID" value="AAA92060.1"/>
    <property type="molecule type" value="mRNA"/>
</dbReference>
<dbReference type="EMBL" id="AF299077">
    <property type="protein sequence ID" value="AAQ14482.1"/>
    <property type="molecule type" value="Genomic_DNA"/>
</dbReference>
<dbReference type="EMBL" id="BT030688">
    <property type="protein sequence ID" value="ABS45004.1"/>
    <property type="molecule type" value="mRNA"/>
</dbReference>
<dbReference type="EMBL" id="BC104524">
    <property type="protein sequence ID" value="AAI04525.1"/>
    <property type="molecule type" value="mRNA"/>
</dbReference>
<dbReference type="RefSeq" id="NP_788835.1">
    <property type="nucleotide sequence ID" value="NM_176662.1"/>
</dbReference>
<dbReference type="RefSeq" id="XP_005208774.1">
    <property type="nucleotide sequence ID" value="XM_005208717.3"/>
</dbReference>
<dbReference type="SMR" id="Q28034"/>
<dbReference type="FunCoup" id="Q28034">
    <property type="interactions" value="4424"/>
</dbReference>
<dbReference type="STRING" id="9913.ENSBTAP00000072069"/>
<dbReference type="GlyCosmos" id="Q28034">
    <property type="glycosylation" value="2 sites, No reported glycans"/>
</dbReference>
<dbReference type="GlyGen" id="Q28034">
    <property type="glycosylation" value="2 sites"/>
</dbReference>
<dbReference type="PaxDb" id="9913-ENSBTAP00000010787"/>
<dbReference type="PeptideAtlas" id="Q28034"/>
<dbReference type="GeneID" id="338067"/>
<dbReference type="KEGG" id="bta:338067"/>
<dbReference type="CTD" id="5589"/>
<dbReference type="VEuPathDB" id="HostDB:ENSBTAG00000008202"/>
<dbReference type="eggNOG" id="KOG2397">
    <property type="taxonomic scope" value="Eukaryota"/>
</dbReference>
<dbReference type="HOGENOM" id="CLU_016834_1_0_1"/>
<dbReference type="InParanoid" id="Q28034"/>
<dbReference type="OrthoDB" id="28322at2759"/>
<dbReference type="TreeFam" id="TF329550"/>
<dbReference type="Reactome" id="R-BTA-381426">
    <property type="pathway name" value="Regulation of Insulin-like Growth Factor (IGF) transport and uptake by Insulin-like Growth Factor Binding Proteins (IGFBPs)"/>
</dbReference>
<dbReference type="Reactome" id="R-BTA-8957275">
    <property type="pathway name" value="Post-translational protein phosphorylation"/>
</dbReference>
<dbReference type="UniPathway" id="UPA00957"/>
<dbReference type="Proteomes" id="UP000009136">
    <property type="component" value="Chromosome 7"/>
</dbReference>
<dbReference type="Bgee" id="ENSBTAG00000008202">
    <property type="expression patterns" value="Expressed in dorsal thalamus and 105 other cell types or tissues"/>
</dbReference>
<dbReference type="GO" id="GO:0017177">
    <property type="term" value="C:glucosidase II complex"/>
    <property type="evidence" value="ECO:0000250"/>
    <property type="project" value="UniProtKB"/>
</dbReference>
<dbReference type="GO" id="GO:0043231">
    <property type="term" value="C:intracellular membrane-bounded organelle"/>
    <property type="evidence" value="ECO:0000250"/>
    <property type="project" value="UniProtKB"/>
</dbReference>
<dbReference type="GO" id="GO:0005509">
    <property type="term" value="F:calcium ion binding"/>
    <property type="evidence" value="ECO:0007669"/>
    <property type="project" value="InterPro"/>
</dbReference>
<dbReference type="GO" id="GO:0016787">
    <property type="term" value="F:hydrolase activity"/>
    <property type="evidence" value="ECO:0007669"/>
    <property type="project" value="UniProtKB-KW"/>
</dbReference>
<dbReference type="GO" id="GO:0001889">
    <property type="term" value="P:liver development"/>
    <property type="evidence" value="ECO:0000318"/>
    <property type="project" value="GO_Central"/>
</dbReference>
<dbReference type="GO" id="GO:0006491">
    <property type="term" value="P:N-glycan processing"/>
    <property type="evidence" value="ECO:0000250"/>
    <property type="project" value="UniProtKB"/>
</dbReference>
<dbReference type="FunFam" id="4.10.400.10:FF:000150">
    <property type="entry name" value="Glucosidase 2 subunit beta"/>
    <property type="match status" value="1"/>
</dbReference>
<dbReference type="FunFam" id="2.70.130.10:FF:000014">
    <property type="entry name" value="glucosidase 2 subunit beta isoform X1"/>
    <property type="match status" value="1"/>
</dbReference>
<dbReference type="Gene3D" id="4.10.400.10">
    <property type="entry name" value="Low-density Lipoprotein Receptor"/>
    <property type="match status" value="1"/>
</dbReference>
<dbReference type="Gene3D" id="2.70.130.10">
    <property type="entry name" value="Mannose-6-phosphate receptor binding domain"/>
    <property type="match status" value="1"/>
</dbReference>
<dbReference type="InterPro" id="IPR018247">
    <property type="entry name" value="EF_Hand_1_Ca_BS"/>
</dbReference>
<dbReference type="InterPro" id="IPR002048">
    <property type="entry name" value="EF_hand_dom"/>
</dbReference>
<dbReference type="InterPro" id="IPR039794">
    <property type="entry name" value="Gtb1-like"/>
</dbReference>
<dbReference type="InterPro" id="IPR036055">
    <property type="entry name" value="LDL_receptor-like_sf"/>
</dbReference>
<dbReference type="InterPro" id="IPR009011">
    <property type="entry name" value="Man6P_isomerase_rcpt-bd_dom_sf"/>
</dbReference>
<dbReference type="InterPro" id="IPR044865">
    <property type="entry name" value="MRH_dom"/>
</dbReference>
<dbReference type="InterPro" id="IPR036607">
    <property type="entry name" value="PRKCSH"/>
</dbReference>
<dbReference type="InterPro" id="IPR028146">
    <property type="entry name" value="PRKCSH_N"/>
</dbReference>
<dbReference type="PANTHER" id="PTHR12630:SF1">
    <property type="entry name" value="GLUCOSIDASE 2 SUBUNIT BETA"/>
    <property type="match status" value="1"/>
</dbReference>
<dbReference type="PANTHER" id="PTHR12630">
    <property type="entry name" value="N-LINKED OLIGOSACCHARIDE PROCESSING"/>
    <property type="match status" value="1"/>
</dbReference>
<dbReference type="Pfam" id="PF13202">
    <property type="entry name" value="EF-hand_5"/>
    <property type="match status" value="1"/>
</dbReference>
<dbReference type="Pfam" id="PF12999">
    <property type="entry name" value="PRKCSH-like"/>
    <property type="match status" value="1"/>
</dbReference>
<dbReference type="Pfam" id="PF13015">
    <property type="entry name" value="PRKCSH_1"/>
    <property type="match status" value="1"/>
</dbReference>
<dbReference type="SUPFAM" id="SSF57424">
    <property type="entry name" value="LDL receptor-like module"/>
    <property type="match status" value="1"/>
</dbReference>
<dbReference type="SUPFAM" id="SSF50911">
    <property type="entry name" value="Mannose 6-phosphate receptor domain"/>
    <property type="match status" value="1"/>
</dbReference>
<dbReference type="PROSITE" id="PS00018">
    <property type="entry name" value="EF_HAND_1"/>
    <property type="match status" value="1"/>
</dbReference>
<dbReference type="PROSITE" id="PS50222">
    <property type="entry name" value="EF_HAND_2"/>
    <property type="match status" value="1"/>
</dbReference>
<dbReference type="PROSITE" id="PS00014">
    <property type="entry name" value="ER_TARGET"/>
    <property type="match status" value="1"/>
</dbReference>
<dbReference type="PROSITE" id="PS51914">
    <property type="entry name" value="MRH"/>
    <property type="match status" value="1"/>
</dbReference>
<feature type="signal peptide" evidence="2">
    <location>
        <begin position="1"/>
        <end position="13"/>
    </location>
</feature>
<feature type="chain" id="PRO_0000004142" description="Glucosidase 2 subunit beta">
    <location>
        <begin position="14"/>
        <end position="533"/>
    </location>
</feature>
<feature type="domain" description="LDL-receptor class A 1" evidence="4">
    <location>
        <begin position="36"/>
        <end position="70"/>
    </location>
</feature>
<feature type="domain" description="LDL-receptor class A 2" evidence="4">
    <location>
        <begin position="71"/>
        <end position="112"/>
    </location>
</feature>
<feature type="domain" description="EF-hand 1" evidence="5">
    <location>
        <begin position="208"/>
        <end position="243"/>
    </location>
</feature>
<feature type="domain" description="EF-hand 2" evidence="12">
    <location>
        <begin position="244"/>
        <end position="279"/>
    </location>
</feature>
<feature type="domain" description="MRH" evidence="6">
    <location>
        <begin position="418"/>
        <end position="519"/>
    </location>
</feature>
<feature type="region of interest" description="Disordered" evidence="8">
    <location>
        <begin position="284"/>
        <end position="363"/>
    </location>
</feature>
<feature type="short sequence motif" description="Prevents secretion from ER" evidence="7">
    <location>
        <begin position="530"/>
        <end position="533"/>
    </location>
</feature>
<feature type="compositionally biased region" description="Acidic residues" evidence="8">
    <location>
        <begin position="312"/>
        <end position="336"/>
    </location>
</feature>
<feature type="binding site" evidence="1">
    <location>
        <position position="48"/>
    </location>
    <ligand>
        <name>substrate</name>
        <note>ligand shared with catalytic subunit</note>
    </ligand>
</feature>
<feature type="binding site" evidence="1">
    <location>
        <position position="49"/>
    </location>
    <ligand>
        <name>Ca(2+)</name>
        <dbReference type="ChEBI" id="CHEBI:29108"/>
        <label>1</label>
    </ligand>
</feature>
<feature type="binding site" evidence="1">
    <location>
        <position position="52"/>
    </location>
    <ligand>
        <name>Ca(2+)</name>
        <dbReference type="ChEBI" id="CHEBI:29108"/>
        <label>1</label>
    </ligand>
</feature>
<feature type="binding site" evidence="1">
    <location>
        <position position="52"/>
    </location>
    <ligand>
        <name>substrate</name>
        <note>ligand shared with catalytic subunit</note>
    </ligand>
</feature>
<feature type="binding site" evidence="1">
    <location>
        <position position="54"/>
    </location>
    <ligand>
        <name>Ca(2+)</name>
        <dbReference type="ChEBI" id="CHEBI:29108"/>
        <label>1</label>
    </ligand>
</feature>
<feature type="binding site" evidence="1">
    <location>
        <position position="56"/>
    </location>
    <ligand>
        <name>Ca(2+)</name>
        <dbReference type="ChEBI" id="CHEBI:29108"/>
        <label>1</label>
    </ligand>
</feature>
<feature type="binding site" evidence="1">
    <location>
        <position position="62"/>
    </location>
    <ligand>
        <name>Ca(2+)</name>
        <dbReference type="ChEBI" id="CHEBI:29108"/>
        <label>1</label>
    </ligand>
</feature>
<feature type="binding site" evidence="1">
    <location>
        <position position="63"/>
    </location>
    <ligand>
        <name>Ca(2+)</name>
        <dbReference type="ChEBI" id="CHEBI:29108"/>
        <label>1</label>
    </ligand>
</feature>
<feature type="binding site" evidence="1">
    <location>
        <position position="93"/>
    </location>
    <ligand>
        <name>Ca(2+)</name>
        <dbReference type="ChEBI" id="CHEBI:29108"/>
        <label>2</label>
    </ligand>
</feature>
<feature type="binding site" evidence="1">
    <location>
        <position position="95"/>
    </location>
    <ligand>
        <name>Ca(2+)</name>
        <dbReference type="ChEBI" id="CHEBI:29108"/>
        <label>2</label>
    </ligand>
</feature>
<feature type="binding site" evidence="1">
    <location>
        <position position="97"/>
    </location>
    <ligand>
        <name>Ca(2+)</name>
        <dbReference type="ChEBI" id="CHEBI:29108"/>
        <label>2</label>
    </ligand>
</feature>
<feature type="binding site" evidence="1">
    <location>
        <position position="103"/>
    </location>
    <ligand>
        <name>Ca(2+)</name>
        <dbReference type="ChEBI" id="CHEBI:29108"/>
        <label>2</label>
    </ligand>
</feature>
<feature type="binding site" evidence="1">
    <location>
        <position position="104"/>
    </location>
    <ligand>
        <name>Ca(2+)</name>
        <dbReference type="ChEBI" id="CHEBI:29108"/>
        <label>2</label>
    </ligand>
</feature>
<feature type="binding site" evidence="5">
    <location>
        <position position="221"/>
    </location>
    <ligand>
        <name>Ca(2+)</name>
        <dbReference type="ChEBI" id="CHEBI:29108"/>
        <label>3</label>
    </ligand>
</feature>
<feature type="binding site" evidence="5">
    <location>
        <position position="223"/>
    </location>
    <ligand>
        <name>Ca(2+)</name>
        <dbReference type="ChEBI" id="CHEBI:29108"/>
        <label>3</label>
    </ligand>
</feature>
<feature type="binding site" evidence="5">
    <location>
        <position position="225"/>
    </location>
    <ligand>
        <name>Ca(2+)</name>
        <dbReference type="ChEBI" id="CHEBI:29108"/>
        <label>3</label>
    </ligand>
</feature>
<feature type="binding site" evidence="5">
    <location>
        <position position="232"/>
    </location>
    <ligand>
        <name>Ca(2+)</name>
        <dbReference type="ChEBI" id="CHEBI:29108"/>
        <label>3</label>
    </ligand>
</feature>
<feature type="modified residue" description="Phosphoserine" evidence="2">
    <location>
        <position position="23"/>
    </location>
</feature>
<feature type="modified residue" description="Phosphoserine; by PKC" evidence="3">
    <location>
        <position position="88"/>
    </location>
</feature>
<feature type="modified residue" description="N6-succinyllysine" evidence="1">
    <location>
        <position position="165"/>
    </location>
</feature>
<feature type="modified residue" description="Phosphoserine" evidence="2">
    <location>
        <position position="167"/>
    </location>
</feature>
<feature type="modified residue" description="Phosphoserine; by PKC" evidence="3">
    <location>
        <position position="388"/>
    </location>
</feature>
<feature type="modified residue" description="Phosphoserine; by PKC" evidence="3">
    <location>
        <position position="395"/>
    </location>
</feature>
<feature type="modified residue" description="Phosphoserine; by PKC" evidence="3">
    <location>
        <position position="439"/>
    </location>
</feature>
<feature type="glycosylation site" description="N-linked (GlcNAc...) asparagine" evidence="3">
    <location>
        <position position="71"/>
    </location>
</feature>
<feature type="glycosylation site" description="N-linked (GlcNAc...) asparagine" evidence="3">
    <location>
        <position position="481"/>
    </location>
</feature>
<feature type="disulfide bond" evidence="4">
    <location>
        <begin position="38"/>
        <end position="57"/>
    </location>
</feature>
<feature type="disulfide bond" evidence="1">
    <location>
        <begin position="55"/>
        <end position="69"/>
    </location>
</feature>
<feature type="disulfide bond" evidence="4">
    <location>
        <begin position="76"/>
        <end position="98"/>
    </location>
</feature>
<feature type="disulfide bond" evidence="1">
    <location>
        <begin position="96"/>
        <end position="111"/>
    </location>
</feature>
<feature type="disulfide bond" evidence="1">
    <location>
        <begin position="99"/>
        <end position="115"/>
    </location>
</feature>
<feature type="disulfide bond" evidence="6">
    <location>
        <begin position="420"/>
        <end position="433"/>
    </location>
</feature>
<feature type="disulfide bond" evidence="6">
    <location>
        <begin position="476"/>
        <end position="505"/>
    </location>
</feature>
<feature type="disulfide bond" evidence="6">
    <location>
        <begin position="490"/>
        <end position="517"/>
    </location>
</feature>
<proteinExistence type="evidence at transcript level"/>
<organism>
    <name type="scientific">Bos taurus</name>
    <name type="common">Bovine</name>
    <dbReference type="NCBI Taxonomy" id="9913"/>
    <lineage>
        <taxon>Eukaryota</taxon>
        <taxon>Metazoa</taxon>
        <taxon>Chordata</taxon>
        <taxon>Craniata</taxon>
        <taxon>Vertebrata</taxon>
        <taxon>Euteleostomi</taxon>
        <taxon>Mammalia</taxon>
        <taxon>Eutheria</taxon>
        <taxon>Laurasiatheria</taxon>
        <taxon>Artiodactyla</taxon>
        <taxon>Ruminantia</taxon>
        <taxon>Pecora</taxon>
        <taxon>Bovidae</taxon>
        <taxon>Bovinae</taxon>
        <taxon>Bos</taxon>
    </lineage>
</organism>
<accession>Q28034</accession>
<accession>A7E3R7</accession>
<accession>Q3SX37</accession>
<comment type="function">
    <text evidence="1 2">Regulatory subunit of glucosidase II that cleaves sequentially the 2 innermost alpha-1,3-linked glucose residues from the Glc(2)Man(9)GlcNAc(2) oligosaccharide precursor of immature glycoproteins (By similarity). Required for efficient PKD1/Polycystin-1 biogenesis and trafficking to the plasma membrane of the primary cilia (By similarity).</text>
</comment>
<comment type="pathway">
    <text evidence="1">Glycan metabolism; N-glycan metabolism.</text>
</comment>
<comment type="subunit">
    <text evidence="1">Heterodimer of a catalytic alpha subunit (GANAB) and a beta subunit (PRKCSH). Binds glycosylated PTPRC.</text>
</comment>
<comment type="subcellular location">
    <subcellularLocation>
        <location evidence="7">Endoplasmic reticulum</location>
    </subcellularLocation>
</comment>
<comment type="tissue specificity">
    <text evidence="9">Ubiquitous. Highly expressed in liver, spleen, lung, duodenum, stomach, adrenal gland, pituitary, testis, corpus luteum, uterus and fetal ovary.</text>
</comment>
<sequence>MLLLLLLLPMCWAVEVRRPRGVSLTNHHFYDESKPFTCLDGSASIPFDQVNDDYCDCKDGSDEPGTAACPNGSFHCTNTGYKALYISSRWVNDGVCDCCDGTDEYNSGIVCENTCKEKGRKERETLQQMAEVTREGFRLKKILIEDWKKAREEKQKKLIELQAGKKSLEDQVEVLRTLKEEAEKPEEAAKDQHRRLWEEQQAISKEQRERELAASAFQELDDDMDGAVSVAELQTHPELDTDGDGALSEGEAQTLLGGDAQMDAAFFYDRVWAAIRDKYRSEVLPTEYPPSPPAPDVMEPKEEQPPMPSPPTEEEDEDEEDEETEEDEDEEDEDSQGEQPKDAPPPAPAPQTASPTEEDRMPPYDEQTQAFINAAQEARNKFEEAERSLKDMEESIRNLEQEISFDFGPNGEFAYLYSQCYELTTNEYVYRLCPFKLVSQKPKLGGSPTSLGTWGSWAGPDHDKFSAMKYEQGTGCWQGPNRSTTVRLLCGKETVVTSTTEPSRCEYLMELMTPAACPEPPPEYPVEGDHDEL</sequence>
<keyword id="KW-0106">Calcium</keyword>
<keyword id="KW-1015">Disulfide bond</keyword>
<keyword id="KW-0256">Endoplasmic reticulum</keyword>
<keyword id="KW-0325">Glycoprotein</keyword>
<keyword id="KW-0378">Hydrolase</keyword>
<keyword id="KW-0479">Metal-binding</keyword>
<keyword id="KW-0597">Phosphoprotein</keyword>
<keyword id="KW-1185">Reference proteome</keyword>
<keyword id="KW-0677">Repeat</keyword>
<keyword id="KW-0732">Signal</keyword>
<gene>
    <name type="primary">PRKCSH</name>
</gene>
<name>GLU2B_BOVIN</name>
<reference key="1">
    <citation type="journal article" date="2000" name="Biol. Reprod.">
        <title>Vacuolar system-associated protein-60: a protein characterized from bovine granulosa and luteal cells that is associated with intracellular vesicles and related to human 80K-H and murine beta-glucosidase II.</title>
        <authorList>
            <person name="Brule S."/>
            <person name="Rabahi F."/>
            <person name="Faure R."/>
            <person name="Beckers J.-F.M.P."/>
            <person name="Silversides D.W."/>
            <person name="Lussier J.G."/>
        </authorList>
    </citation>
    <scope>NUCLEOTIDE SEQUENCE [MRNA]</scope>
    <scope>TISSUE SPECIFICITY</scope>
    <source>
        <strain>Holstein</strain>
        <tissue>Corpus luteum</tissue>
    </source>
</reference>
<reference key="2">
    <citation type="submission" date="2000-08" db="EMBL/GenBank/DDBJ databases">
        <title>Bos taurus vacuolar system associated protein-60 (VASAP-60) promotor and complete gene sequences.</title>
        <authorList>
            <person name="Brule S."/>
            <person name="Silversides D."/>
            <person name="Lussier J.G."/>
        </authorList>
    </citation>
    <scope>NUCLEOTIDE SEQUENCE [GENOMIC DNA]</scope>
</reference>
<reference key="3">
    <citation type="journal article" date="2005" name="BMC Genomics">
        <title>Characterization of 954 bovine full-CDS cDNA sequences.</title>
        <authorList>
            <person name="Harhay G.P."/>
            <person name="Sonstegard T.S."/>
            <person name="Keele J.W."/>
            <person name="Heaton M.P."/>
            <person name="Clawson M.L."/>
            <person name="Snelling W.M."/>
            <person name="Wiedmann R.T."/>
            <person name="Van Tassell C.P."/>
            <person name="Smith T.P.L."/>
        </authorList>
    </citation>
    <scope>NUCLEOTIDE SEQUENCE [LARGE SCALE MRNA]</scope>
</reference>
<reference key="4">
    <citation type="submission" date="2005-09" db="EMBL/GenBank/DDBJ databases">
        <authorList>
            <consortium name="NIH - Mammalian Gene Collection (MGC) project"/>
        </authorList>
    </citation>
    <scope>NUCLEOTIDE SEQUENCE [LARGE SCALE MRNA]</scope>
    <source>
        <strain>Hereford</strain>
        <tissue>Ascending colon</tissue>
    </source>
</reference>